<gene>
    <name type="primary">YAP1</name>
    <name type="ordered locus">KLLA0A01760g</name>
</gene>
<dbReference type="EMBL" id="AF006499">
    <property type="protein sequence ID" value="AAC39320.1"/>
    <property type="molecule type" value="Genomic_DNA"/>
</dbReference>
<dbReference type="EMBL" id="CR382121">
    <property type="protein sequence ID" value="CAH02665.1"/>
    <property type="molecule type" value="Genomic_DNA"/>
</dbReference>
<dbReference type="RefSeq" id="XP_451077.1">
    <property type="nucleotide sequence ID" value="XM_451077.1"/>
</dbReference>
<dbReference type="SMR" id="P56095"/>
<dbReference type="FunCoup" id="P56095">
    <property type="interactions" value="4117"/>
</dbReference>
<dbReference type="STRING" id="284590.P56095"/>
<dbReference type="PaxDb" id="284590-P56095"/>
<dbReference type="KEGG" id="kla:KLLA0_A01760g"/>
<dbReference type="eggNOG" id="ENOG502RPD7">
    <property type="taxonomic scope" value="Eukaryota"/>
</dbReference>
<dbReference type="HOGENOM" id="CLU_032750_0_0_1"/>
<dbReference type="InParanoid" id="P56095"/>
<dbReference type="OMA" id="LNMACGN"/>
<dbReference type="Proteomes" id="UP000000598">
    <property type="component" value="Chromosome A"/>
</dbReference>
<dbReference type="GO" id="GO:0005737">
    <property type="term" value="C:cytoplasm"/>
    <property type="evidence" value="ECO:0007669"/>
    <property type="project" value="UniProtKB-SubCell"/>
</dbReference>
<dbReference type="GO" id="GO:0090575">
    <property type="term" value="C:RNA polymerase II transcription regulator complex"/>
    <property type="evidence" value="ECO:0007669"/>
    <property type="project" value="TreeGrafter"/>
</dbReference>
<dbReference type="GO" id="GO:0001228">
    <property type="term" value="F:DNA-binding transcription activator activity, RNA polymerase II-specific"/>
    <property type="evidence" value="ECO:0007669"/>
    <property type="project" value="TreeGrafter"/>
</dbReference>
<dbReference type="GO" id="GO:0000976">
    <property type="term" value="F:transcription cis-regulatory region binding"/>
    <property type="evidence" value="ECO:0007669"/>
    <property type="project" value="InterPro"/>
</dbReference>
<dbReference type="GO" id="GO:0033554">
    <property type="term" value="P:cellular response to stress"/>
    <property type="evidence" value="ECO:0007669"/>
    <property type="project" value="UniProtKB-ARBA"/>
</dbReference>
<dbReference type="CDD" id="cd14688">
    <property type="entry name" value="bZIP_YAP"/>
    <property type="match status" value="1"/>
</dbReference>
<dbReference type="FunFam" id="1.20.5.170:FF:000067">
    <property type="entry name" value="BZIP transcription factor"/>
    <property type="match status" value="1"/>
</dbReference>
<dbReference type="Gene3D" id="1.20.5.170">
    <property type="match status" value="1"/>
</dbReference>
<dbReference type="Gene3D" id="1.10.238.100">
    <property type="entry name" value="YAP1 redox domain. Chain B"/>
    <property type="match status" value="1"/>
</dbReference>
<dbReference type="InterPro" id="IPR050936">
    <property type="entry name" value="AP-1-like"/>
</dbReference>
<dbReference type="InterPro" id="IPR004827">
    <property type="entry name" value="bZIP"/>
</dbReference>
<dbReference type="InterPro" id="IPR046347">
    <property type="entry name" value="bZIP_sf"/>
</dbReference>
<dbReference type="InterPro" id="IPR013910">
    <property type="entry name" value="TF_PAP1"/>
</dbReference>
<dbReference type="InterPro" id="IPR023167">
    <property type="entry name" value="Yap1_redox_dom_sf"/>
</dbReference>
<dbReference type="PANTHER" id="PTHR40621:SF6">
    <property type="entry name" value="AP-1-LIKE TRANSCRIPTION FACTOR YAP1-RELATED"/>
    <property type="match status" value="1"/>
</dbReference>
<dbReference type="PANTHER" id="PTHR40621">
    <property type="entry name" value="TRANSCRIPTION FACTOR KAPC-RELATED"/>
    <property type="match status" value="1"/>
</dbReference>
<dbReference type="Pfam" id="PF00170">
    <property type="entry name" value="bZIP_1"/>
    <property type="match status" value="1"/>
</dbReference>
<dbReference type="Pfam" id="PF08601">
    <property type="entry name" value="PAP1"/>
    <property type="match status" value="1"/>
</dbReference>
<dbReference type="SMART" id="SM00338">
    <property type="entry name" value="BRLZ"/>
    <property type="match status" value="1"/>
</dbReference>
<dbReference type="SUPFAM" id="SSF57959">
    <property type="entry name" value="Leucine zipper domain"/>
    <property type="match status" value="1"/>
</dbReference>
<dbReference type="SUPFAM" id="SSF111430">
    <property type="entry name" value="YAP1 redox domain"/>
    <property type="match status" value="1"/>
</dbReference>
<dbReference type="PROSITE" id="PS50217">
    <property type="entry name" value="BZIP"/>
    <property type="match status" value="1"/>
</dbReference>
<dbReference type="PROSITE" id="PS00036">
    <property type="entry name" value="BZIP_BASIC"/>
    <property type="match status" value="1"/>
</dbReference>
<protein>
    <recommendedName>
        <fullName evidence="6">AP-1-like transcription factor YAP1</fullName>
    </recommendedName>
</protein>
<accession>P56095</accession>
<name>AP1_KLULA</name>
<keyword id="KW-0010">Activator</keyword>
<keyword id="KW-0963">Cytoplasm</keyword>
<keyword id="KW-1015">Disulfide bond</keyword>
<keyword id="KW-0238">DNA-binding</keyword>
<keyword id="KW-0539">Nucleus</keyword>
<keyword id="KW-1185">Reference proteome</keyword>
<keyword id="KW-0804">Transcription</keyword>
<keyword id="KW-0805">Transcription regulation</keyword>
<feature type="chain" id="PRO_0000076531" description="AP-1-like transcription factor YAP1">
    <location>
        <begin position="1"/>
        <end position="583"/>
    </location>
</feature>
<feature type="domain" description="bZIP" evidence="3">
    <location>
        <begin position="51"/>
        <end position="114"/>
    </location>
</feature>
<feature type="region of interest" description="Disordered" evidence="4">
    <location>
        <begin position="1"/>
        <end position="86"/>
    </location>
</feature>
<feature type="region of interest" description="Basic motif" evidence="3">
    <location>
        <begin position="54"/>
        <end position="77"/>
    </location>
</feature>
<feature type="region of interest" description="Leucine-zipper" evidence="3">
    <location>
        <begin position="79"/>
        <end position="86"/>
    </location>
</feature>
<feature type="region of interest" description="Disordered" evidence="4">
    <location>
        <begin position="177"/>
        <end position="233"/>
    </location>
</feature>
<feature type="region of interest" description="n-CRD" evidence="1">
    <location>
        <begin position="265"/>
        <end position="272"/>
    </location>
</feature>
<feature type="region of interest" description="Disordered" evidence="4">
    <location>
        <begin position="275"/>
        <end position="329"/>
    </location>
</feature>
<feature type="region of interest" description="Disordered" evidence="4">
    <location>
        <begin position="350"/>
        <end position="373"/>
    </location>
</feature>
<feature type="region of interest" description="c-CRD" evidence="1">
    <location>
        <begin position="531"/>
        <end position="562"/>
    </location>
</feature>
<feature type="short sequence motif" description="Bipartite nuclear localization signal" evidence="2">
    <location>
        <begin position="41"/>
        <end position="48"/>
    </location>
</feature>
<feature type="short sequence motif" description="Bipartite nuclear localization signal" evidence="2">
    <location>
        <begin position="120"/>
        <end position="127"/>
    </location>
</feature>
<feature type="short sequence motif" description="Nuclear export signal" evidence="1">
    <location>
        <begin position="547"/>
        <end position="554"/>
    </location>
</feature>
<feature type="compositionally biased region" description="Basic and acidic residues" evidence="4">
    <location>
        <begin position="8"/>
        <end position="17"/>
    </location>
</feature>
<feature type="compositionally biased region" description="Low complexity" evidence="4">
    <location>
        <begin position="24"/>
        <end position="36"/>
    </location>
</feature>
<feature type="compositionally biased region" description="Basic residues" evidence="4">
    <location>
        <begin position="37"/>
        <end position="46"/>
    </location>
</feature>
<feature type="compositionally biased region" description="Basic and acidic residues" evidence="4">
    <location>
        <begin position="47"/>
        <end position="58"/>
    </location>
</feature>
<feature type="compositionally biased region" description="Basic and acidic residues" evidence="4">
    <location>
        <begin position="67"/>
        <end position="84"/>
    </location>
</feature>
<feature type="compositionally biased region" description="Low complexity" evidence="4">
    <location>
        <begin position="177"/>
        <end position="195"/>
    </location>
</feature>
<feature type="compositionally biased region" description="Polar residues" evidence="4">
    <location>
        <begin position="196"/>
        <end position="207"/>
    </location>
</feature>
<feature type="compositionally biased region" description="Low complexity" evidence="4">
    <location>
        <begin position="208"/>
        <end position="230"/>
    </location>
</feature>
<feature type="compositionally biased region" description="Low complexity" evidence="4">
    <location>
        <begin position="297"/>
        <end position="312"/>
    </location>
</feature>
<feature type="compositionally biased region" description="Polar residues" evidence="4">
    <location>
        <begin position="316"/>
        <end position="329"/>
    </location>
</feature>
<feature type="disulfide bond" description="In nuclear retained form" evidence="1">
    <location>
        <begin position="265"/>
        <end position="531"/>
    </location>
</feature>
<feature type="disulfide bond" description="In nuclear retained form" evidence="1">
    <location>
        <begin position="272"/>
        <end position="562"/>
    </location>
</feature>
<organism>
    <name type="scientific">Kluyveromyces lactis (strain ATCC 8585 / CBS 2359 / DSM 70799 / NBRC 1267 / NRRL Y-1140 / WM37)</name>
    <name type="common">Yeast</name>
    <name type="synonym">Candida sphaerica</name>
    <dbReference type="NCBI Taxonomy" id="284590"/>
    <lineage>
        <taxon>Eukaryota</taxon>
        <taxon>Fungi</taxon>
        <taxon>Dikarya</taxon>
        <taxon>Ascomycota</taxon>
        <taxon>Saccharomycotina</taxon>
        <taxon>Saccharomycetes</taxon>
        <taxon>Saccharomycetales</taxon>
        <taxon>Saccharomycetaceae</taxon>
        <taxon>Kluyveromyces</taxon>
    </lineage>
</organism>
<sequence length="583" mass="63886">MSTSTAKRPFDNKRAGSPDDGTDSDSGGNNSGSSPASKRRERKPGRKPLETEAKDKRTAQNRAAQRAFRERRERKMKELEDKVSQLESLNKQSELETKFLRNQVTNLLSELKRYNPELPKKRDSILLDYLAKQRKASIDSNPDFSAAANKAANSKDSSTAISSSNFQFEFPWKMDPSKIPSPSSDSTSPSASTSILDNANNKSVSSTNLNHSRSSISNSSSSPSNVNGLSSRKHSNTLNLYQTQSNVTSEFDFDSQFDESVSSFCSKLSMACGTKSNPIPKASPVSTPSSSDLLKPKSNSNVNITNHNNNKINSKDLSSSAPLHDSASASALNNHDSVNAVSNQFSVDKQYNDSSHSQATPNGLDNDSSVSAWQQPSFGQLGFRTDQLFDLDLDSASPITKQKDNNYSTTTNNTNSPAKADGMYWNFNTPLSNMVSRNMQNPEIPFIDTGLAFPDYDDPLLDILKEEQENEQVEGDSDPIQALINEEPSMPLCHDPAANAGASVSETDKLSNQEEIVQDIIPSNDGKLLKCSEVWDRITAHPRYSDLDIDGLCLELRTKAKCSEKGVVVNAEDVQKALISHMQ</sequence>
<proteinExistence type="inferred from homology"/>
<comment type="function">
    <text evidence="1 5">Transcription activator involved in oxidative stress response and cadmium resistance (PubMed:9439570). Regulates the transcription of genes encoding antioxidant enzymes and components of the cellular thiol-reducing pathways. Activity of the transcription factor is controlled through oxidation of specific cysteine residues resulting in the alteration of its subcellular location. Activation by alkyl hydroperoxides or cadmium induces nuclear accumulation and as a result YAP1 transcriptional activity (By similarity).</text>
</comment>
<comment type="subcellular location">
    <subcellularLocation>
        <location evidence="1">Nucleus</location>
    </subcellularLocation>
    <subcellularLocation>
        <location evidence="1">Cytoplasm</location>
    </subcellularLocation>
    <text evidence="1">Oxidized YAP1 is found predominantly in the nucleus, while reduced YAP1 is continuously exported to the cytoplasm by CRM1/exportin 1.</text>
</comment>
<comment type="domain">
    <text evidence="1">Contains two cysteine rich domains (CRD), referred to as the N- and C-terminal CRD's, n-CRD (Cys-265 and Cys-272) and c-CRD (Cys-531, Cys-553 and Cys-562), respectively. A nuclear export signal is embedded in the c-CRD, with which the nuclear export protein CRM1/exportin 1 interacts only in the absence of disulfide bonds (or otherwise oxidized cysteines) within the c-CRD or between the c-CRD and the n-CRD.</text>
</comment>
<comment type="PTM">
    <text evidence="1">Oxidative stress induces conformational changes through oxidation of cysteine residues, masking the nuclear export signal, thus abolishing nuclear export by CRM1/exportin 1.</text>
</comment>
<comment type="similarity">
    <text evidence="6">Belongs to the bZIP family. YAP subfamily.</text>
</comment>
<evidence type="ECO:0000250" key="1">
    <source>
        <dbReference type="UniProtKB" id="P19880"/>
    </source>
</evidence>
<evidence type="ECO:0000255" key="2">
    <source>
        <dbReference type="PROSITE-ProRule" id="PRU00768"/>
    </source>
</evidence>
<evidence type="ECO:0000255" key="3">
    <source>
        <dbReference type="PROSITE-ProRule" id="PRU00978"/>
    </source>
</evidence>
<evidence type="ECO:0000256" key="4">
    <source>
        <dbReference type="SAM" id="MobiDB-lite"/>
    </source>
</evidence>
<evidence type="ECO:0000269" key="5">
    <source>
    </source>
</evidence>
<evidence type="ECO:0000305" key="6"/>
<reference key="1">
    <citation type="journal article" date="1997" name="Mol. Gen. Genet.">
        <title>Characterization of an AP-1-like transcription factor that mediates an oxidative stress response in Kluyveromyces lactis.</title>
        <authorList>
            <person name="Billard P."/>
            <person name="Dumond H."/>
            <person name="Bolotin-Fukuhara M."/>
        </authorList>
    </citation>
    <scope>NUCLEOTIDE SEQUENCE [GENOMIC DNA]</scope>
    <scope>FUNCTION</scope>
</reference>
<reference key="2">
    <citation type="journal article" date="2004" name="Nature">
        <title>Genome evolution in yeasts.</title>
        <authorList>
            <person name="Dujon B."/>
            <person name="Sherman D."/>
            <person name="Fischer G."/>
            <person name="Durrens P."/>
            <person name="Casaregola S."/>
            <person name="Lafontaine I."/>
            <person name="de Montigny J."/>
            <person name="Marck C."/>
            <person name="Neuveglise C."/>
            <person name="Talla E."/>
            <person name="Goffard N."/>
            <person name="Frangeul L."/>
            <person name="Aigle M."/>
            <person name="Anthouard V."/>
            <person name="Babour A."/>
            <person name="Barbe V."/>
            <person name="Barnay S."/>
            <person name="Blanchin S."/>
            <person name="Beckerich J.-M."/>
            <person name="Beyne E."/>
            <person name="Bleykasten C."/>
            <person name="Boisrame A."/>
            <person name="Boyer J."/>
            <person name="Cattolico L."/>
            <person name="Confanioleri F."/>
            <person name="de Daruvar A."/>
            <person name="Despons L."/>
            <person name="Fabre E."/>
            <person name="Fairhead C."/>
            <person name="Ferry-Dumazet H."/>
            <person name="Groppi A."/>
            <person name="Hantraye F."/>
            <person name="Hennequin C."/>
            <person name="Jauniaux N."/>
            <person name="Joyet P."/>
            <person name="Kachouri R."/>
            <person name="Kerrest A."/>
            <person name="Koszul R."/>
            <person name="Lemaire M."/>
            <person name="Lesur I."/>
            <person name="Ma L."/>
            <person name="Muller H."/>
            <person name="Nicaud J.-M."/>
            <person name="Nikolski M."/>
            <person name="Oztas S."/>
            <person name="Ozier-Kalogeropoulos O."/>
            <person name="Pellenz S."/>
            <person name="Potier S."/>
            <person name="Richard G.-F."/>
            <person name="Straub M.-L."/>
            <person name="Suleau A."/>
            <person name="Swennen D."/>
            <person name="Tekaia F."/>
            <person name="Wesolowski-Louvel M."/>
            <person name="Westhof E."/>
            <person name="Wirth B."/>
            <person name="Zeniou-Meyer M."/>
            <person name="Zivanovic Y."/>
            <person name="Bolotin-Fukuhara M."/>
            <person name="Thierry A."/>
            <person name="Bouchier C."/>
            <person name="Caudron B."/>
            <person name="Scarpelli C."/>
            <person name="Gaillardin C."/>
            <person name="Weissenbach J."/>
            <person name="Wincker P."/>
            <person name="Souciet J.-L."/>
        </authorList>
    </citation>
    <scope>NUCLEOTIDE SEQUENCE [LARGE SCALE GENOMIC DNA]</scope>
    <source>
        <strain>ATCC 8585 / CBS 2359 / DSM 70799 / NBRC 1267 / NRRL Y-1140 / WM37</strain>
    </source>
</reference>